<protein>
    <recommendedName>
        <fullName evidence="1">Glycerol-3-phosphate acyltransferase</fullName>
        <shortName evidence="1">GPAT</shortName>
        <ecNumber evidence="1">2.3.1.15</ecNumber>
    </recommendedName>
</protein>
<organism>
    <name type="scientific">Shigella boydii serotype 18 (strain CDC 3083-94 / BS512)</name>
    <dbReference type="NCBI Taxonomy" id="344609"/>
    <lineage>
        <taxon>Bacteria</taxon>
        <taxon>Pseudomonadati</taxon>
        <taxon>Pseudomonadota</taxon>
        <taxon>Gammaproteobacteria</taxon>
        <taxon>Enterobacterales</taxon>
        <taxon>Enterobacteriaceae</taxon>
        <taxon>Shigella</taxon>
    </lineage>
</organism>
<name>PLSB_SHIB3</name>
<proteinExistence type="inferred from homology"/>
<accession>B2TX75</accession>
<comment type="catalytic activity">
    <reaction evidence="1">
        <text>sn-glycerol 3-phosphate + an acyl-CoA = a 1-acyl-sn-glycero-3-phosphate + CoA</text>
        <dbReference type="Rhea" id="RHEA:15325"/>
        <dbReference type="ChEBI" id="CHEBI:57287"/>
        <dbReference type="ChEBI" id="CHEBI:57597"/>
        <dbReference type="ChEBI" id="CHEBI:57970"/>
        <dbReference type="ChEBI" id="CHEBI:58342"/>
        <dbReference type="EC" id="2.3.1.15"/>
    </reaction>
</comment>
<comment type="pathway">
    <text evidence="1">Phospholipid metabolism; CDP-diacylglycerol biosynthesis; CDP-diacylglycerol from sn-glycerol 3-phosphate: step 1/3.</text>
</comment>
<comment type="subcellular location">
    <subcellularLocation>
        <location evidence="1">Cell inner membrane</location>
        <topology evidence="1">Peripheral membrane protein</topology>
        <orientation evidence="1">Cytoplasmic side</orientation>
    </subcellularLocation>
</comment>
<comment type="domain">
    <text evidence="1">The HXXXXD motif is essential for acyltransferase activity and may constitute the binding site for the phosphate moiety of the glycerol-3-phosphate.</text>
</comment>
<comment type="similarity">
    <text evidence="1">Belongs to the GPAT/DAPAT family.</text>
</comment>
<sequence>MSGWPRIYYKLLNLPLSILVKSKSIPADPAPELGLDTSRPIMYVLPYNSKADLLTLRAQCLAHDLPDPLEPLEIDGMLLPRYVFIHGGPRVFTYYTPKEESIKLFHDYLDLHRSNPNLDVQMVPVSVMFGRAPGREKGEVNPPLRMLNGVQKFFAVLWLGRDSFVRFSPSVSLRRMADEHGTDKTIAQKLARVARMHFARQRLAAVGPRLPARQDLFNKLLASRAIAKAVEDEAHSKKISHEKAQQNAIALMEEIAANFSYEMIRLTDRILGFTWNRLYQGINVHNAERVRQLAHDGHELVYVPCHRSHMDYLLLSYVLYHQGLVPPHIAAGINLNFWPAGPIFRRLGAFFIRRTFKGNKLYSTVFREYLGELFSRGYSVEYFVEGGRSRTGRLLDPKTGTLSMTIQAMLRGGTRPITLIPIYIGYEHVMEVGTYAKELRGATKEKESLPQMLRGLSKLRNLGQGYVNFGEPMPLMTYLNQHVPDWRESIDPIEAVRPAWLTPTVNNIAADLMVRINNAGAANAMNLCCTALLASRQRSLTREQLTEQLNCYLDLMRNVPYSTDSTVPSASASELIDHALQMNKFEVEKDTIGDIIILPREQAVLMTYYRNNIAHMLVLPSLMAAIVTQHRHISRDVLMEHVNVLYPMLKAELFLRWDRDELPDVIDALANEMQRQGLITLQDDELHINPSHSRTLQLLAAGARETLQRYAITFWLLSANPSINRGTLEKESRTVAQRLSVLHGINAPEFFDKAVFSSLVLTLRDEGYISDSGDAEPAETMKVYQLLAELITSDVRLTIESATQGEG</sequence>
<reference key="1">
    <citation type="submission" date="2008-05" db="EMBL/GenBank/DDBJ databases">
        <title>Complete sequence of Shigella boydii serotype 18 strain BS512.</title>
        <authorList>
            <person name="Rasko D.A."/>
            <person name="Rosovitz M."/>
            <person name="Maurelli A.T."/>
            <person name="Myers G."/>
            <person name="Seshadri R."/>
            <person name="Cer R."/>
            <person name="Jiang L."/>
            <person name="Ravel J."/>
            <person name="Sebastian Y."/>
        </authorList>
    </citation>
    <scope>NUCLEOTIDE SEQUENCE [LARGE SCALE GENOMIC DNA]</scope>
    <source>
        <strain>CDC 3083-94 / BS512</strain>
    </source>
</reference>
<evidence type="ECO:0000255" key="1">
    <source>
        <dbReference type="HAMAP-Rule" id="MF_00393"/>
    </source>
</evidence>
<dbReference type="EC" id="2.3.1.15" evidence="1"/>
<dbReference type="EMBL" id="CP001063">
    <property type="protein sequence ID" value="ACD06508.1"/>
    <property type="molecule type" value="Genomic_DNA"/>
</dbReference>
<dbReference type="RefSeq" id="WP_012421231.1">
    <property type="nucleotide sequence ID" value="NC_010658.1"/>
</dbReference>
<dbReference type="SMR" id="B2TX75"/>
<dbReference type="STRING" id="344609.SbBS512_E4556"/>
<dbReference type="KEGG" id="sbc:SbBS512_E4556"/>
<dbReference type="HOGENOM" id="CLU_015407_0_0_6"/>
<dbReference type="UniPathway" id="UPA00557">
    <property type="reaction ID" value="UER00612"/>
</dbReference>
<dbReference type="Proteomes" id="UP000001030">
    <property type="component" value="Chromosome"/>
</dbReference>
<dbReference type="GO" id="GO:0005886">
    <property type="term" value="C:plasma membrane"/>
    <property type="evidence" value="ECO:0007669"/>
    <property type="project" value="UniProtKB-SubCell"/>
</dbReference>
<dbReference type="GO" id="GO:0004366">
    <property type="term" value="F:glycerol-3-phosphate O-acyltransferase activity"/>
    <property type="evidence" value="ECO:0007669"/>
    <property type="project" value="UniProtKB-UniRule"/>
</dbReference>
<dbReference type="GO" id="GO:0016024">
    <property type="term" value="P:CDP-diacylglycerol biosynthetic process"/>
    <property type="evidence" value="ECO:0007669"/>
    <property type="project" value="UniProtKB-UniRule"/>
</dbReference>
<dbReference type="GO" id="GO:0006631">
    <property type="term" value="P:fatty acid metabolic process"/>
    <property type="evidence" value="ECO:0007669"/>
    <property type="project" value="TreeGrafter"/>
</dbReference>
<dbReference type="CDD" id="cd07993">
    <property type="entry name" value="LPLAT_DHAPAT-like"/>
    <property type="match status" value="1"/>
</dbReference>
<dbReference type="HAMAP" id="MF_00393">
    <property type="entry name" value="Glyc3P_acyltrans"/>
    <property type="match status" value="1"/>
</dbReference>
<dbReference type="InterPro" id="IPR022284">
    <property type="entry name" value="GPAT/DHAPAT"/>
</dbReference>
<dbReference type="InterPro" id="IPR045520">
    <property type="entry name" value="GPAT/DHAPAT_C"/>
</dbReference>
<dbReference type="InterPro" id="IPR041728">
    <property type="entry name" value="GPAT/DHAPAT_LPLAT"/>
</dbReference>
<dbReference type="InterPro" id="IPR028354">
    <property type="entry name" value="GPAT_PlsB"/>
</dbReference>
<dbReference type="InterPro" id="IPR002123">
    <property type="entry name" value="Plipid/glycerol_acylTrfase"/>
</dbReference>
<dbReference type="NCBIfam" id="TIGR03703">
    <property type="entry name" value="plsB"/>
    <property type="match status" value="1"/>
</dbReference>
<dbReference type="NCBIfam" id="NF003441">
    <property type="entry name" value="PRK04974.1"/>
    <property type="match status" value="1"/>
</dbReference>
<dbReference type="PANTHER" id="PTHR12563:SF17">
    <property type="entry name" value="DIHYDROXYACETONE PHOSPHATE ACYLTRANSFERASE"/>
    <property type="match status" value="1"/>
</dbReference>
<dbReference type="PANTHER" id="PTHR12563">
    <property type="entry name" value="GLYCEROL-3-PHOSPHATE ACYLTRANSFERASE"/>
    <property type="match status" value="1"/>
</dbReference>
<dbReference type="Pfam" id="PF01553">
    <property type="entry name" value="Acyltransferase"/>
    <property type="match status" value="1"/>
</dbReference>
<dbReference type="Pfam" id="PF19277">
    <property type="entry name" value="GPAT_C"/>
    <property type="match status" value="1"/>
</dbReference>
<dbReference type="PIRSF" id="PIRSF500064">
    <property type="entry name" value="GPAT"/>
    <property type="match status" value="1"/>
</dbReference>
<dbReference type="PIRSF" id="PIRSF000437">
    <property type="entry name" value="GPAT_DHAPAT"/>
    <property type="match status" value="1"/>
</dbReference>
<dbReference type="SMART" id="SM00563">
    <property type="entry name" value="PlsC"/>
    <property type="match status" value="1"/>
</dbReference>
<dbReference type="SUPFAM" id="SSF69593">
    <property type="entry name" value="Glycerol-3-phosphate (1)-acyltransferase"/>
    <property type="match status" value="1"/>
</dbReference>
<keyword id="KW-0012">Acyltransferase</keyword>
<keyword id="KW-0997">Cell inner membrane</keyword>
<keyword id="KW-1003">Cell membrane</keyword>
<keyword id="KW-0444">Lipid biosynthesis</keyword>
<keyword id="KW-0443">Lipid metabolism</keyword>
<keyword id="KW-0472">Membrane</keyword>
<keyword id="KW-0594">Phospholipid biosynthesis</keyword>
<keyword id="KW-1208">Phospholipid metabolism</keyword>
<keyword id="KW-1185">Reference proteome</keyword>
<keyword id="KW-0808">Transferase</keyword>
<feature type="chain" id="PRO_1000123099" description="Glycerol-3-phosphate acyltransferase">
    <location>
        <begin position="1"/>
        <end position="807"/>
    </location>
</feature>
<feature type="short sequence motif" description="HXXXXD motif">
    <location>
        <begin position="305"/>
        <end position="310"/>
    </location>
</feature>
<gene>
    <name evidence="1" type="primary">plsB</name>
    <name type="ordered locus">SbBS512_E4556</name>
</gene>